<gene>
    <name type="primary">becn1</name>
</gene>
<proteinExistence type="evidence at transcript level"/>
<name>BECN1_XENLA</name>
<reference key="1">
    <citation type="submission" date="2004-06" db="EMBL/GenBank/DDBJ databases">
        <authorList>
            <consortium name="NIH - Xenopus Gene Collection (XGC) project"/>
        </authorList>
    </citation>
    <scope>NUCLEOTIDE SEQUENCE [LARGE SCALE MRNA]</scope>
    <source>
        <tissue>Spleen</tissue>
    </source>
</reference>
<protein>
    <recommendedName>
        <fullName>Beclin-1</fullName>
    </recommendedName>
</protein>
<evidence type="ECO:0000250" key="1">
    <source>
        <dbReference type="UniProtKB" id="O88597"/>
    </source>
</evidence>
<evidence type="ECO:0000250" key="2">
    <source>
        <dbReference type="UniProtKB" id="Q14457"/>
    </source>
</evidence>
<evidence type="ECO:0000255" key="3"/>
<evidence type="ECO:0000305" key="4"/>
<organism>
    <name type="scientific">Xenopus laevis</name>
    <name type="common">African clawed frog</name>
    <dbReference type="NCBI Taxonomy" id="8355"/>
    <lineage>
        <taxon>Eukaryota</taxon>
        <taxon>Metazoa</taxon>
        <taxon>Chordata</taxon>
        <taxon>Craniata</taxon>
        <taxon>Vertebrata</taxon>
        <taxon>Euteleostomi</taxon>
        <taxon>Amphibia</taxon>
        <taxon>Batrachia</taxon>
        <taxon>Anura</taxon>
        <taxon>Pipoidea</taxon>
        <taxon>Pipidae</taxon>
        <taxon>Xenopodinae</taxon>
        <taxon>Xenopus</taxon>
        <taxon>Xenopus</taxon>
    </lineage>
</organism>
<feature type="chain" id="PRO_0000316292" description="Beclin-1">
    <location>
        <begin position="1"/>
        <end position="445"/>
    </location>
</feature>
<feature type="region of interest" description="Evolutionary conserved domain (ECD)" evidence="2">
    <location>
        <begin position="240"/>
        <end position="445"/>
    </location>
</feature>
<feature type="region of interest" description="Required for membrane-association" evidence="2">
    <location>
        <begin position="420"/>
        <end position="445"/>
    </location>
</feature>
<feature type="coiled-coil region" evidence="3">
    <location>
        <begin position="137"/>
        <end position="264"/>
    </location>
</feature>
<feature type="short sequence motif" description="BH3" evidence="2">
    <location>
        <begin position="103"/>
        <end position="122"/>
    </location>
</feature>
<dbReference type="EMBL" id="BC073292">
    <property type="protein sequence ID" value="AAH73292.1"/>
    <property type="molecule type" value="mRNA"/>
</dbReference>
<dbReference type="RefSeq" id="NP_001085751.1">
    <property type="nucleotide sequence ID" value="NM_001092282.1"/>
</dbReference>
<dbReference type="SMR" id="Q6GP52"/>
<dbReference type="DNASU" id="444178"/>
<dbReference type="GeneID" id="444178"/>
<dbReference type="KEGG" id="xla:444178"/>
<dbReference type="AGR" id="Xenbase:XB-GENE-999325"/>
<dbReference type="CTD" id="444178"/>
<dbReference type="Xenbase" id="XB-GENE-999325">
    <property type="gene designation" value="becn1.L"/>
</dbReference>
<dbReference type="OrthoDB" id="20368at2759"/>
<dbReference type="Proteomes" id="UP000186698">
    <property type="component" value="Chromosome 9_10L"/>
</dbReference>
<dbReference type="Bgee" id="444178">
    <property type="expression patterns" value="Expressed in internal ear and 19 other cell types or tissues"/>
</dbReference>
<dbReference type="GO" id="GO:0005776">
    <property type="term" value="C:autophagosome"/>
    <property type="evidence" value="ECO:0007669"/>
    <property type="project" value="UniProtKB-SubCell"/>
</dbReference>
<dbReference type="GO" id="GO:0005789">
    <property type="term" value="C:endoplasmic reticulum membrane"/>
    <property type="evidence" value="ECO:0007669"/>
    <property type="project" value="UniProtKB-SubCell"/>
</dbReference>
<dbReference type="GO" id="GO:0010008">
    <property type="term" value="C:endosome membrane"/>
    <property type="evidence" value="ECO:0007669"/>
    <property type="project" value="UniProtKB-SubCell"/>
</dbReference>
<dbReference type="GO" id="GO:0005794">
    <property type="term" value="C:Golgi apparatus"/>
    <property type="evidence" value="ECO:0007669"/>
    <property type="project" value="UniProtKB-SubCell"/>
</dbReference>
<dbReference type="GO" id="GO:0031966">
    <property type="term" value="C:mitochondrial membrane"/>
    <property type="evidence" value="ECO:0007669"/>
    <property type="project" value="UniProtKB-SubCell"/>
</dbReference>
<dbReference type="GO" id="GO:0000407">
    <property type="term" value="C:phagophore assembly site"/>
    <property type="evidence" value="ECO:0000318"/>
    <property type="project" value="GO_Central"/>
</dbReference>
<dbReference type="GO" id="GO:0034271">
    <property type="term" value="C:phosphatidylinositol 3-kinase complex, class III, type I"/>
    <property type="evidence" value="ECO:0000318"/>
    <property type="project" value="GO_Central"/>
</dbReference>
<dbReference type="GO" id="GO:0034272">
    <property type="term" value="C:phosphatidylinositol 3-kinase complex, class III, type II"/>
    <property type="evidence" value="ECO:0000318"/>
    <property type="project" value="GO_Central"/>
</dbReference>
<dbReference type="GO" id="GO:0043548">
    <property type="term" value="F:phosphatidylinositol 3-kinase binding"/>
    <property type="evidence" value="ECO:0000318"/>
    <property type="project" value="GO_Central"/>
</dbReference>
<dbReference type="GO" id="GO:0030674">
    <property type="term" value="F:protein-macromolecule adaptor activity"/>
    <property type="evidence" value="ECO:0000318"/>
    <property type="project" value="GO_Central"/>
</dbReference>
<dbReference type="GO" id="GO:0000045">
    <property type="term" value="P:autophagosome assembly"/>
    <property type="evidence" value="ECO:0000318"/>
    <property type="project" value="GO_Central"/>
</dbReference>
<dbReference type="GO" id="GO:0006914">
    <property type="term" value="P:autophagy"/>
    <property type="evidence" value="ECO:0000250"/>
    <property type="project" value="UniProtKB"/>
</dbReference>
<dbReference type="GO" id="GO:0051301">
    <property type="term" value="P:cell division"/>
    <property type="evidence" value="ECO:0007669"/>
    <property type="project" value="UniProtKB-KW"/>
</dbReference>
<dbReference type="GO" id="GO:0006995">
    <property type="term" value="P:cellular response to nitrogen starvation"/>
    <property type="evidence" value="ECO:0000318"/>
    <property type="project" value="GO_Central"/>
</dbReference>
<dbReference type="GO" id="GO:0051607">
    <property type="term" value="P:defense response to virus"/>
    <property type="evidence" value="ECO:0007669"/>
    <property type="project" value="UniProtKB-KW"/>
</dbReference>
<dbReference type="GO" id="GO:0045022">
    <property type="term" value="P:early endosome to late endosome transport"/>
    <property type="evidence" value="ECO:0000250"/>
    <property type="project" value="UniProtKB"/>
</dbReference>
<dbReference type="GO" id="GO:0045324">
    <property type="term" value="P:late endosome to vacuole transport"/>
    <property type="evidence" value="ECO:0000318"/>
    <property type="project" value="GO_Central"/>
</dbReference>
<dbReference type="GO" id="GO:0000423">
    <property type="term" value="P:mitophagy"/>
    <property type="evidence" value="ECO:0000318"/>
    <property type="project" value="GO_Central"/>
</dbReference>
<dbReference type="GO" id="GO:0010508">
    <property type="term" value="P:positive regulation of autophagy"/>
    <property type="evidence" value="ECO:0000250"/>
    <property type="project" value="UniProtKB"/>
</dbReference>
<dbReference type="GO" id="GO:0032465">
    <property type="term" value="P:regulation of cytokinesis"/>
    <property type="evidence" value="ECO:0000250"/>
    <property type="project" value="UniProtKB"/>
</dbReference>
<dbReference type="FunFam" id="1.10.418.40:FF:000001">
    <property type="entry name" value="beclin-1 isoform X1"/>
    <property type="match status" value="1"/>
</dbReference>
<dbReference type="Gene3D" id="6.10.250.3110">
    <property type="match status" value="1"/>
</dbReference>
<dbReference type="Gene3D" id="1.10.418.40">
    <property type="entry name" value="Autophagy protein 6/Beclin 1"/>
    <property type="match status" value="1"/>
</dbReference>
<dbReference type="InterPro" id="IPR007243">
    <property type="entry name" value="Atg6/Beclin"/>
</dbReference>
<dbReference type="InterPro" id="IPR038274">
    <property type="entry name" value="Atg6/Beclin_C_sf"/>
</dbReference>
<dbReference type="InterPro" id="IPR041691">
    <property type="entry name" value="Atg6/beclin_CC"/>
</dbReference>
<dbReference type="InterPro" id="IPR040455">
    <property type="entry name" value="Atg6_BARA"/>
</dbReference>
<dbReference type="InterPro" id="IPR029318">
    <property type="entry name" value="BH3_dom"/>
</dbReference>
<dbReference type="PANTHER" id="PTHR12768">
    <property type="entry name" value="BECLIN 1"/>
    <property type="match status" value="1"/>
</dbReference>
<dbReference type="PANTHER" id="PTHR12768:SF4">
    <property type="entry name" value="BECLIN-1"/>
    <property type="match status" value="1"/>
</dbReference>
<dbReference type="Pfam" id="PF04111">
    <property type="entry name" value="APG6"/>
    <property type="match status" value="1"/>
</dbReference>
<dbReference type="Pfam" id="PF17675">
    <property type="entry name" value="APG6_N"/>
    <property type="match status" value="1"/>
</dbReference>
<dbReference type="Pfam" id="PF15285">
    <property type="entry name" value="BH3"/>
    <property type="match status" value="1"/>
</dbReference>
<accession>Q6GP52</accession>
<comment type="function">
    <text evidence="2">Plays a central role in autophagy (By similarity). Acts as core subunit of different PI3K complex forms that mediate formation of phosphatidylinositol 3-phosphate and are believed to play a role in multiple membrane trafficking pathways: PI3KC3-C1 is involved in initiation of autophagosomes and PI3KC3-C2 in maturation of autophagosomes and endocytosis (By similarity). Involved in regulation of degradative endocytic trafficking and required for the abscission step in cytokinesis, probably in the context of PI3KC3-C2 (By similarity). Essential for the formation of PI3KC3-C2 but not PI3KC3-C1 PI3K complex forms (By similarity). Involved in endocytosis including endosome formation in neuronal cells (By similarity).</text>
</comment>
<comment type="subunit">
    <text evidence="2">Component of the PI3K (PI3KC3/PI3K-III/class III phosphatidylinositol 3-kinase) complex (By similarity).</text>
</comment>
<comment type="subcellular location">
    <subcellularLocation>
        <location evidence="1">Cytoplasm</location>
    </subcellularLocation>
    <subcellularLocation>
        <location evidence="2">Golgi apparatus</location>
        <location evidence="2">trans-Golgi network membrane</location>
        <topology evidence="2">Peripheral membrane protein</topology>
    </subcellularLocation>
    <subcellularLocation>
        <location evidence="2">Endosome membrane</location>
        <topology evidence="2">Peripheral membrane protein</topology>
    </subcellularLocation>
    <subcellularLocation>
        <location evidence="2">Endoplasmic reticulum membrane</location>
        <topology evidence="2">Peripheral membrane protein</topology>
    </subcellularLocation>
    <subcellularLocation>
        <location evidence="2">Mitochondrion membrane</location>
        <topology evidence="2">Peripheral membrane protein</topology>
    </subcellularLocation>
    <subcellularLocation>
        <location evidence="4">Cytoplasmic vesicle</location>
        <location evidence="4">Autophagosome</location>
    </subcellularLocation>
</comment>
<comment type="PTM">
    <text evidence="1 2">May be proteolytically processed by caspases; the C-terminal fragment(s) may induce apoptosis.</text>
</comment>
<comment type="similarity">
    <text evidence="4">Belongs to the beclin family.</text>
</comment>
<keyword id="KW-0051">Antiviral defense</keyword>
<keyword id="KW-0072">Autophagy</keyword>
<keyword id="KW-0131">Cell cycle</keyword>
<keyword id="KW-0132">Cell division</keyword>
<keyword id="KW-0175">Coiled coil</keyword>
<keyword id="KW-0963">Cytoplasm</keyword>
<keyword id="KW-0968">Cytoplasmic vesicle</keyword>
<keyword id="KW-0256">Endoplasmic reticulum</keyword>
<keyword id="KW-0967">Endosome</keyword>
<keyword id="KW-0333">Golgi apparatus</keyword>
<keyword id="KW-0472">Membrane</keyword>
<keyword id="KW-0496">Mitochondrion</keyword>
<keyword id="KW-1185">Reference proteome</keyword>
<sequence length="445" mass="51294">METSKSSTMQVSFVCQRCSQPLKLDTSFKILDKVTMQELTAPLVTTAAVKPGDIQEVDSNIEETFAENRTDGVSRRLIPPARMMSTESATSFTLIGEASDGGTMENLSRRLKVTGDLFDIMSGQTDVDHPLCEECTDTLLDQLDTQLNITENECQNYKRCLEILERMNEDDKEKLEAKLKELAEDEERLIQELEEVERNRELVAKDIEKVREEAERLEQEEARYQKEYSEFKRQQLELDDDLKSVENQMRYAQIQLDKLKKTNVFNATFHIWHSGQFGTINNFRLGRLPSVPVEWNEINAAWGQTVLLLHALANKMGLQFQRYRLVPFGNHSYLESLTDKSKELPLYCSGGLRFFWDNKFDHAMVAFLDCVQQFKEEVEKGDTGFCLPYRMDVDKGKIEDTGGSGGSYSIKTQFNSEEQWTKALKFMLTNLKWGLAWVSSQFYNK</sequence>